<organism>
    <name type="scientific">Yarrowia lipolytica (strain CLIB 122 / E 150)</name>
    <name type="common">Yeast</name>
    <name type="synonym">Candida lipolytica</name>
    <dbReference type="NCBI Taxonomy" id="284591"/>
    <lineage>
        <taxon>Eukaryota</taxon>
        <taxon>Fungi</taxon>
        <taxon>Dikarya</taxon>
        <taxon>Ascomycota</taxon>
        <taxon>Saccharomycotina</taxon>
        <taxon>Dipodascomycetes</taxon>
        <taxon>Dipodascales</taxon>
        <taxon>Dipodascales incertae sedis</taxon>
        <taxon>Yarrowia</taxon>
    </lineage>
</organism>
<dbReference type="EMBL" id="CR382131">
    <property type="protein sequence ID" value="CAG78984.1"/>
    <property type="molecule type" value="Genomic_DNA"/>
</dbReference>
<dbReference type="RefSeq" id="XP_503405.1">
    <property type="nucleotide sequence ID" value="XM_503405.1"/>
</dbReference>
<dbReference type="SMR" id="Q6C7F7"/>
<dbReference type="EnsemblFungi" id="CAG78984">
    <property type="protein sequence ID" value="CAG78984"/>
    <property type="gene ID" value="YALI0_E01188g"/>
</dbReference>
<dbReference type="KEGG" id="yli:2912942"/>
<dbReference type="VEuPathDB" id="FungiDB:YALI0_E01188g"/>
<dbReference type="HOGENOM" id="CLU_470264_0_0_1"/>
<dbReference type="InParanoid" id="Q6C7F7"/>
<dbReference type="OrthoDB" id="119400at4891"/>
<dbReference type="Proteomes" id="UP000001300">
    <property type="component" value="Chromosome E"/>
</dbReference>
<dbReference type="GO" id="GO:0005743">
    <property type="term" value="C:mitochondrial inner membrane"/>
    <property type="evidence" value="ECO:0000318"/>
    <property type="project" value="GO_Central"/>
</dbReference>
<dbReference type="GO" id="GO:0007007">
    <property type="term" value="P:inner mitochondrial membrane organization"/>
    <property type="evidence" value="ECO:0000318"/>
    <property type="project" value="GO_Central"/>
</dbReference>
<dbReference type="InterPro" id="IPR008839">
    <property type="entry name" value="MDM33_fungi"/>
</dbReference>
<dbReference type="PANTHER" id="PTHR31961">
    <property type="entry name" value="SENSITIVE TO HIGH EXPRESSION PROTEIN 9, MITOCHONDRIAL"/>
    <property type="match status" value="1"/>
</dbReference>
<dbReference type="PANTHER" id="PTHR31961:SF3">
    <property type="entry name" value="SENSITIVE TO HIGH EXPRESSION PROTEIN 9, MITOCHONDRIAL"/>
    <property type="match status" value="1"/>
</dbReference>
<dbReference type="Pfam" id="PF05546">
    <property type="entry name" value="She9_MDM33"/>
    <property type="match status" value="1"/>
</dbReference>
<feature type="transit peptide" description="Mitochondrion" evidence="2">
    <location>
        <begin position="1"/>
        <end position="20"/>
    </location>
</feature>
<feature type="chain" id="PRO_0000351066" description="Sensitive to high expression protein 9 homolog, mitochondrial">
    <location>
        <begin position="21"/>
        <end position="580"/>
    </location>
</feature>
<feature type="topological domain" description="Mitochondrial matrix" evidence="2">
    <location>
        <begin position="21"/>
        <end position="298"/>
    </location>
</feature>
<feature type="transmembrane region" description="Helical" evidence="2">
    <location>
        <begin position="299"/>
        <end position="319"/>
    </location>
</feature>
<feature type="topological domain" description="Mitochondrial intermembrane" evidence="2">
    <location>
        <begin position="320"/>
        <end position="557"/>
    </location>
</feature>
<feature type="transmembrane region" description="Helical" evidence="2">
    <location>
        <begin position="558"/>
        <end position="578"/>
    </location>
</feature>
<feature type="topological domain" description="Mitochondrial matrix" evidence="2">
    <location>
        <begin position="579"/>
        <end position="580"/>
    </location>
</feature>
<feature type="region of interest" description="Disordered" evidence="3">
    <location>
        <begin position="45"/>
        <end position="68"/>
    </location>
</feature>
<feature type="region of interest" description="Disordered" evidence="3">
    <location>
        <begin position="86"/>
        <end position="134"/>
    </location>
</feature>
<feature type="coiled-coil region" evidence="2">
    <location>
        <begin position="177"/>
        <end position="275"/>
    </location>
</feature>
<feature type="coiled-coil region" evidence="2">
    <location>
        <begin position="377"/>
        <end position="423"/>
    </location>
</feature>
<feature type="compositionally biased region" description="Basic and acidic residues" evidence="3">
    <location>
        <begin position="86"/>
        <end position="108"/>
    </location>
</feature>
<feature type="compositionally biased region" description="Basic and acidic residues" evidence="3">
    <location>
        <begin position="119"/>
        <end position="134"/>
    </location>
</feature>
<keyword id="KW-0175">Coiled coil</keyword>
<keyword id="KW-0472">Membrane</keyword>
<keyword id="KW-0496">Mitochondrion</keyword>
<keyword id="KW-0999">Mitochondrion inner membrane</keyword>
<keyword id="KW-1185">Reference proteome</keyword>
<keyword id="KW-0809">Transit peptide</keyword>
<keyword id="KW-0812">Transmembrane</keyword>
<keyword id="KW-1133">Transmembrane helix</keyword>
<protein>
    <recommendedName>
        <fullName>Sensitive to high expression protein 9 homolog, mitochondrial</fullName>
    </recommendedName>
</protein>
<accession>Q6C7F7</accession>
<proteinExistence type="inferred from homology"/>
<sequence length="580" mass="66744">MLTRRMQCLRGAGVFRTVAALPLLAQRPNFYRPLTCSALRRNNDHSYRHESRKDKEMQDLKESRKMREQEALDDAAFRNTFEFAVEKTRDSDGKSPEPEVEIDVDREAQTPWDPVGSQSRHETRQEHRERFDDIKKTLPSSVHESQPQMYKWFGEKMDQIQAGALTAGQTLNEVTGYKAIEKLKLSIEKLEDEVLEARAEVREAKRMYSDAISERSNSQREVNELLQRKHNWTPADLERFTELYRNDHANEHSVNDAKKRLGECEHHVEDLTLQLSKQILTRYHEEQIWSDKIRRASTWGTWILMGFNVVLFIVVQLGLEPWKRRRLVGSFEDKVKESLQEWEARNEARRLEEATMAATATQAITELQRRIESPHVSKADVVEAEAEINSIKTNLATWFKEREEEEKEEIAKEAHELAVIAEDPDMTDVHHKPHPPQPVDTERVVRPHLVENFEHHVADPVHHPTLPITSTPVLEEDAPPPRIHPLVQMSPDSPDDGTKTFTATRDGYDVHPLVVRPTTPPHFMLQVWGAAKLSVESATNKTVAVVRSTFQTAEQRPFESTIVASLGGLCGGLVTFLYLR</sequence>
<name>SHE9_YARLI</name>
<evidence type="ECO:0000250" key="1"/>
<evidence type="ECO:0000255" key="2"/>
<evidence type="ECO:0000256" key="3">
    <source>
        <dbReference type="SAM" id="MobiDB-lite"/>
    </source>
</evidence>
<evidence type="ECO:0000305" key="4"/>
<gene>
    <name type="primary">SHE9</name>
    <name type="ordered locus">YALI0E01188g</name>
</gene>
<comment type="function">
    <text evidence="1">Required for the maintenance of the structure of the mitochondrial inner membrane. Involved in mitochondrial morphology. Causes growth arrest when highly overexpressed (By similarity).</text>
</comment>
<comment type="subunit">
    <text evidence="1">Homooligomer.</text>
</comment>
<comment type="subcellular location">
    <subcellularLocation>
        <location evidence="1">Mitochondrion inner membrane</location>
        <topology evidence="1">Multi-pass membrane protein</topology>
    </subcellularLocation>
</comment>
<comment type="similarity">
    <text evidence="4">Belongs to the SHE9 family.</text>
</comment>
<reference key="1">
    <citation type="journal article" date="2004" name="Nature">
        <title>Genome evolution in yeasts.</title>
        <authorList>
            <person name="Dujon B."/>
            <person name="Sherman D."/>
            <person name="Fischer G."/>
            <person name="Durrens P."/>
            <person name="Casaregola S."/>
            <person name="Lafontaine I."/>
            <person name="de Montigny J."/>
            <person name="Marck C."/>
            <person name="Neuveglise C."/>
            <person name="Talla E."/>
            <person name="Goffard N."/>
            <person name="Frangeul L."/>
            <person name="Aigle M."/>
            <person name="Anthouard V."/>
            <person name="Babour A."/>
            <person name="Barbe V."/>
            <person name="Barnay S."/>
            <person name="Blanchin S."/>
            <person name="Beckerich J.-M."/>
            <person name="Beyne E."/>
            <person name="Bleykasten C."/>
            <person name="Boisrame A."/>
            <person name="Boyer J."/>
            <person name="Cattolico L."/>
            <person name="Confanioleri F."/>
            <person name="de Daruvar A."/>
            <person name="Despons L."/>
            <person name="Fabre E."/>
            <person name="Fairhead C."/>
            <person name="Ferry-Dumazet H."/>
            <person name="Groppi A."/>
            <person name="Hantraye F."/>
            <person name="Hennequin C."/>
            <person name="Jauniaux N."/>
            <person name="Joyet P."/>
            <person name="Kachouri R."/>
            <person name="Kerrest A."/>
            <person name="Koszul R."/>
            <person name="Lemaire M."/>
            <person name="Lesur I."/>
            <person name="Ma L."/>
            <person name="Muller H."/>
            <person name="Nicaud J.-M."/>
            <person name="Nikolski M."/>
            <person name="Oztas S."/>
            <person name="Ozier-Kalogeropoulos O."/>
            <person name="Pellenz S."/>
            <person name="Potier S."/>
            <person name="Richard G.-F."/>
            <person name="Straub M.-L."/>
            <person name="Suleau A."/>
            <person name="Swennen D."/>
            <person name="Tekaia F."/>
            <person name="Wesolowski-Louvel M."/>
            <person name="Westhof E."/>
            <person name="Wirth B."/>
            <person name="Zeniou-Meyer M."/>
            <person name="Zivanovic Y."/>
            <person name="Bolotin-Fukuhara M."/>
            <person name="Thierry A."/>
            <person name="Bouchier C."/>
            <person name="Caudron B."/>
            <person name="Scarpelli C."/>
            <person name="Gaillardin C."/>
            <person name="Weissenbach J."/>
            <person name="Wincker P."/>
            <person name="Souciet J.-L."/>
        </authorList>
    </citation>
    <scope>NUCLEOTIDE SEQUENCE [LARGE SCALE GENOMIC DNA]</scope>
    <source>
        <strain>CLIB 122 / E 150</strain>
    </source>
</reference>